<keyword id="KW-1015">Disulfide bond</keyword>
<keyword id="KW-0249">Electron transport</keyword>
<keyword id="KW-0676">Redox-active center</keyword>
<keyword id="KW-1185">Reference proteome</keyword>
<keyword id="KW-0813">Transport</keyword>
<proteinExistence type="inferred from homology"/>
<name>THIO_PSEAE</name>
<organism>
    <name type="scientific">Pseudomonas aeruginosa (strain ATCC 15692 / DSM 22644 / CIP 104116 / JCM 14847 / LMG 12228 / 1C / PRS 101 / PAO1)</name>
    <dbReference type="NCBI Taxonomy" id="208964"/>
    <lineage>
        <taxon>Bacteria</taxon>
        <taxon>Pseudomonadati</taxon>
        <taxon>Pseudomonadota</taxon>
        <taxon>Gammaproteobacteria</taxon>
        <taxon>Pseudomonadales</taxon>
        <taxon>Pseudomonadaceae</taxon>
        <taxon>Pseudomonas</taxon>
    </lineage>
</organism>
<evidence type="ECO:0000250" key="1"/>
<evidence type="ECO:0000255" key="2">
    <source>
        <dbReference type="PROSITE-ProRule" id="PRU00691"/>
    </source>
</evidence>
<evidence type="ECO:0000305" key="3"/>
<feature type="chain" id="PRO_0000120120" description="Thioredoxin">
    <location>
        <begin position="1"/>
        <end position="108"/>
    </location>
</feature>
<feature type="domain" description="Thioredoxin" evidence="2">
    <location>
        <begin position="2"/>
        <end position="108"/>
    </location>
</feature>
<feature type="disulfide bond" description="Redox-active" evidence="2">
    <location>
        <begin position="33"/>
        <end position="36"/>
    </location>
</feature>
<protein>
    <recommendedName>
        <fullName>Thioredoxin</fullName>
        <shortName>Trx</shortName>
    </recommendedName>
</protein>
<comment type="function">
    <text evidence="1">Participates in various redox reactions through the reversible oxidation of its active center dithiol to a disulfide and catalyzes dithiol-disulfide exchange reactions.</text>
</comment>
<comment type="similarity">
    <text evidence="3">Belongs to the thioredoxin family.</text>
</comment>
<reference key="1">
    <citation type="journal article" date="1999" name="Appl. Environ. Microbiol.">
        <title>Cloning and characterization of polyphosphate kinase and exopolyphosphatase genes from Pseudomonas aeruginosa 8830.</title>
        <authorList>
            <person name="Zago A."/>
            <person name="Chugani S."/>
            <person name="Chakrabarty A.M."/>
        </authorList>
    </citation>
    <scope>NUCLEOTIDE SEQUENCE [GENOMIC DNA]</scope>
    <source>
        <strain>8830</strain>
    </source>
</reference>
<reference key="2">
    <citation type="journal article" date="2000" name="Nature">
        <title>Complete genome sequence of Pseudomonas aeruginosa PAO1, an opportunistic pathogen.</title>
        <authorList>
            <person name="Stover C.K."/>
            <person name="Pham X.-Q.T."/>
            <person name="Erwin A.L."/>
            <person name="Mizoguchi S.D."/>
            <person name="Warrener P."/>
            <person name="Hickey M.J."/>
            <person name="Brinkman F.S.L."/>
            <person name="Hufnagle W.O."/>
            <person name="Kowalik D.J."/>
            <person name="Lagrou M."/>
            <person name="Garber R.L."/>
            <person name="Goltry L."/>
            <person name="Tolentino E."/>
            <person name="Westbrock-Wadman S."/>
            <person name="Yuan Y."/>
            <person name="Brody L.L."/>
            <person name="Coulter S.N."/>
            <person name="Folger K.R."/>
            <person name="Kas A."/>
            <person name="Larbig K."/>
            <person name="Lim R.M."/>
            <person name="Smith K.A."/>
            <person name="Spencer D.H."/>
            <person name="Wong G.K.-S."/>
            <person name="Wu Z."/>
            <person name="Paulsen I.T."/>
            <person name="Reizer J."/>
            <person name="Saier M.H. Jr."/>
            <person name="Hancock R.E.W."/>
            <person name="Lory S."/>
            <person name="Olson M.V."/>
        </authorList>
    </citation>
    <scope>NUCLEOTIDE SEQUENCE [LARGE SCALE GENOMIC DNA]</scope>
    <source>
        <strain>ATCC 15692 / DSM 22644 / CIP 104116 / JCM 14847 / LMG 12228 / 1C / PRS 101 / PAO1</strain>
    </source>
</reference>
<gene>
    <name type="primary">trxA</name>
    <name type="synonym">trx</name>
    <name type="ordered locus">PA5240</name>
</gene>
<dbReference type="EMBL" id="AF053463">
    <property type="protein sequence ID" value="AAD29108.2"/>
    <property type="molecule type" value="Genomic_DNA"/>
</dbReference>
<dbReference type="EMBL" id="AE004091">
    <property type="protein sequence ID" value="AAG08625.1"/>
    <property type="molecule type" value="Genomic_DNA"/>
</dbReference>
<dbReference type="PIR" id="G82991">
    <property type="entry name" value="G82991"/>
</dbReference>
<dbReference type="RefSeq" id="NP_253927.1">
    <property type="nucleotide sequence ID" value="NC_002516.2"/>
</dbReference>
<dbReference type="RefSeq" id="WP_003096336.1">
    <property type="nucleotide sequence ID" value="NZ_QZGE01000002.1"/>
</dbReference>
<dbReference type="SMR" id="Q9X2T1"/>
<dbReference type="FunCoup" id="Q9X2T1">
    <property type="interactions" value="682"/>
</dbReference>
<dbReference type="STRING" id="208964.PA5240"/>
<dbReference type="PaxDb" id="208964-PA5240"/>
<dbReference type="DNASU" id="877946"/>
<dbReference type="GeneID" id="877946"/>
<dbReference type="KEGG" id="pae:PA5240"/>
<dbReference type="PATRIC" id="fig|208964.12.peg.5492"/>
<dbReference type="PseudoCAP" id="PA5240"/>
<dbReference type="HOGENOM" id="CLU_090389_10_2_6"/>
<dbReference type="InParanoid" id="Q9X2T1"/>
<dbReference type="OrthoDB" id="9790390at2"/>
<dbReference type="PhylomeDB" id="Q9X2T1"/>
<dbReference type="BioCyc" id="PAER208964:G1FZ6-5360-MONOMER"/>
<dbReference type="Proteomes" id="UP000002438">
    <property type="component" value="Chromosome"/>
</dbReference>
<dbReference type="GO" id="GO:0005737">
    <property type="term" value="C:cytoplasm"/>
    <property type="evidence" value="ECO:0000318"/>
    <property type="project" value="GO_Central"/>
</dbReference>
<dbReference type="GO" id="GO:0005829">
    <property type="term" value="C:cytosol"/>
    <property type="evidence" value="ECO:0000318"/>
    <property type="project" value="GO_Central"/>
</dbReference>
<dbReference type="GO" id="GO:0015035">
    <property type="term" value="F:protein-disulfide reductase activity"/>
    <property type="evidence" value="ECO:0000318"/>
    <property type="project" value="GO_Central"/>
</dbReference>
<dbReference type="GO" id="GO:0045454">
    <property type="term" value="P:cell redox homeostasis"/>
    <property type="evidence" value="ECO:0000318"/>
    <property type="project" value="GO_Central"/>
</dbReference>
<dbReference type="CDD" id="cd02947">
    <property type="entry name" value="TRX_family"/>
    <property type="match status" value="1"/>
</dbReference>
<dbReference type="FunFam" id="3.40.30.10:FF:000001">
    <property type="entry name" value="Thioredoxin"/>
    <property type="match status" value="1"/>
</dbReference>
<dbReference type="Gene3D" id="3.40.30.10">
    <property type="entry name" value="Glutaredoxin"/>
    <property type="match status" value="1"/>
</dbReference>
<dbReference type="InterPro" id="IPR005746">
    <property type="entry name" value="Thioredoxin"/>
</dbReference>
<dbReference type="InterPro" id="IPR036249">
    <property type="entry name" value="Thioredoxin-like_sf"/>
</dbReference>
<dbReference type="InterPro" id="IPR017937">
    <property type="entry name" value="Thioredoxin_CS"/>
</dbReference>
<dbReference type="InterPro" id="IPR013766">
    <property type="entry name" value="Thioredoxin_domain"/>
</dbReference>
<dbReference type="NCBIfam" id="NF006898">
    <property type="entry name" value="PRK09381.1"/>
    <property type="match status" value="1"/>
</dbReference>
<dbReference type="NCBIfam" id="TIGR01068">
    <property type="entry name" value="thioredoxin"/>
    <property type="match status" value="1"/>
</dbReference>
<dbReference type="PANTHER" id="PTHR45663">
    <property type="entry name" value="GEO12009P1"/>
    <property type="match status" value="1"/>
</dbReference>
<dbReference type="PANTHER" id="PTHR45663:SF11">
    <property type="entry name" value="GEO12009P1"/>
    <property type="match status" value="1"/>
</dbReference>
<dbReference type="Pfam" id="PF00085">
    <property type="entry name" value="Thioredoxin"/>
    <property type="match status" value="1"/>
</dbReference>
<dbReference type="PIRSF" id="PIRSF000077">
    <property type="entry name" value="Thioredoxin"/>
    <property type="match status" value="1"/>
</dbReference>
<dbReference type="PRINTS" id="PR00421">
    <property type="entry name" value="THIOREDOXIN"/>
</dbReference>
<dbReference type="SUPFAM" id="SSF52833">
    <property type="entry name" value="Thioredoxin-like"/>
    <property type="match status" value="1"/>
</dbReference>
<dbReference type="PROSITE" id="PS00194">
    <property type="entry name" value="THIOREDOXIN_1"/>
    <property type="match status" value="1"/>
</dbReference>
<dbReference type="PROSITE" id="PS51352">
    <property type="entry name" value="THIOREDOXIN_2"/>
    <property type="match status" value="1"/>
</dbReference>
<sequence length="108" mass="11870">MSEHIVNVTDASFEQDVLKADGPVLVDYWAEWCGPCKMIAPVLDEVARDYQGKLKVCKLNIDENQDTPPKYGVRGIPTLMLFKDGNVEATKVGALSKSQLAAFLDANI</sequence>
<accession>Q9X2T1</accession>